<comment type="function">
    <text evidence="1">Produces ATP from ADP in the presence of a proton gradient across the membrane. The alpha chain is a regulatory subunit.</text>
</comment>
<comment type="catalytic activity">
    <reaction evidence="1">
        <text>ATP + H2O + 4 H(+)(in) = ADP + phosphate + 5 H(+)(out)</text>
        <dbReference type="Rhea" id="RHEA:57720"/>
        <dbReference type="ChEBI" id="CHEBI:15377"/>
        <dbReference type="ChEBI" id="CHEBI:15378"/>
        <dbReference type="ChEBI" id="CHEBI:30616"/>
        <dbReference type="ChEBI" id="CHEBI:43474"/>
        <dbReference type="ChEBI" id="CHEBI:456216"/>
        <dbReference type="EC" id="7.1.2.2"/>
    </reaction>
</comment>
<comment type="subunit">
    <text evidence="1">F-type ATPases have 2 components, CF(1) - the catalytic core - and CF(0) - the membrane proton channel. CF(1) has five subunits: alpha(3), beta(3), gamma(1), delta(1), epsilon(1). CF(0) has three main subunits: a(1), b(2) and c(9-12). The alpha and beta chains form an alternating ring which encloses part of the gamma chain. CF(1) is attached to CF(0) by a central stalk formed by the gamma and epsilon chains, while a peripheral stalk is formed by the delta and b chains.</text>
</comment>
<comment type="subcellular location">
    <subcellularLocation>
        <location evidence="1">Cell inner membrane</location>
        <topology evidence="1">Peripheral membrane protein</topology>
    </subcellularLocation>
</comment>
<comment type="similarity">
    <text evidence="1">Belongs to the ATPase alpha/beta chains family.</text>
</comment>
<dbReference type="EC" id="7.1.2.2" evidence="1"/>
<dbReference type="EMBL" id="CP000644">
    <property type="protein sequence ID" value="ABO92267.1"/>
    <property type="molecule type" value="Genomic_DNA"/>
</dbReference>
<dbReference type="RefSeq" id="WP_005319624.1">
    <property type="nucleotide sequence ID" value="NC_009348.1"/>
</dbReference>
<dbReference type="SMR" id="A4STP5"/>
<dbReference type="STRING" id="29491.GCA_000820065_00589"/>
<dbReference type="GeneID" id="79882023"/>
<dbReference type="KEGG" id="asa:ASA_4352"/>
<dbReference type="eggNOG" id="COG0056">
    <property type="taxonomic scope" value="Bacteria"/>
</dbReference>
<dbReference type="HOGENOM" id="CLU_010091_2_1_6"/>
<dbReference type="Proteomes" id="UP000000225">
    <property type="component" value="Chromosome"/>
</dbReference>
<dbReference type="GO" id="GO:0005886">
    <property type="term" value="C:plasma membrane"/>
    <property type="evidence" value="ECO:0007669"/>
    <property type="project" value="UniProtKB-SubCell"/>
</dbReference>
<dbReference type="GO" id="GO:0045259">
    <property type="term" value="C:proton-transporting ATP synthase complex"/>
    <property type="evidence" value="ECO:0007669"/>
    <property type="project" value="UniProtKB-KW"/>
</dbReference>
<dbReference type="GO" id="GO:0043531">
    <property type="term" value="F:ADP binding"/>
    <property type="evidence" value="ECO:0007669"/>
    <property type="project" value="TreeGrafter"/>
</dbReference>
<dbReference type="GO" id="GO:0005524">
    <property type="term" value="F:ATP binding"/>
    <property type="evidence" value="ECO:0007669"/>
    <property type="project" value="UniProtKB-UniRule"/>
</dbReference>
<dbReference type="GO" id="GO:0046933">
    <property type="term" value="F:proton-transporting ATP synthase activity, rotational mechanism"/>
    <property type="evidence" value="ECO:0007669"/>
    <property type="project" value="UniProtKB-UniRule"/>
</dbReference>
<dbReference type="CDD" id="cd18113">
    <property type="entry name" value="ATP-synt_F1_alpha_C"/>
    <property type="match status" value="1"/>
</dbReference>
<dbReference type="CDD" id="cd18116">
    <property type="entry name" value="ATP-synt_F1_alpha_N"/>
    <property type="match status" value="1"/>
</dbReference>
<dbReference type="CDD" id="cd01132">
    <property type="entry name" value="F1-ATPase_alpha_CD"/>
    <property type="match status" value="1"/>
</dbReference>
<dbReference type="FunFam" id="1.20.150.20:FF:000001">
    <property type="entry name" value="ATP synthase subunit alpha"/>
    <property type="match status" value="1"/>
</dbReference>
<dbReference type="FunFam" id="2.40.30.20:FF:000001">
    <property type="entry name" value="ATP synthase subunit alpha"/>
    <property type="match status" value="1"/>
</dbReference>
<dbReference type="FunFam" id="3.40.50.300:FF:000002">
    <property type="entry name" value="ATP synthase subunit alpha"/>
    <property type="match status" value="1"/>
</dbReference>
<dbReference type="Gene3D" id="2.40.30.20">
    <property type="match status" value="1"/>
</dbReference>
<dbReference type="Gene3D" id="1.20.150.20">
    <property type="entry name" value="ATP synthase alpha/beta chain, C-terminal domain"/>
    <property type="match status" value="1"/>
</dbReference>
<dbReference type="Gene3D" id="3.40.50.300">
    <property type="entry name" value="P-loop containing nucleotide triphosphate hydrolases"/>
    <property type="match status" value="1"/>
</dbReference>
<dbReference type="HAMAP" id="MF_01346">
    <property type="entry name" value="ATP_synth_alpha_bact"/>
    <property type="match status" value="1"/>
</dbReference>
<dbReference type="InterPro" id="IPR023366">
    <property type="entry name" value="ATP_synth_asu-like_sf"/>
</dbReference>
<dbReference type="InterPro" id="IPR000793">
    <property type="entry name" value="ATP_synth_asu_C"/>
</dbReference>
<dbReference type="InterPro" id="IPR038376">
    <property type="entry name" value="ATP_synth_asu_C_sf"/>
</dbReference>
<dbReference type="InterPro" id="IPR033732">
    <property type="entry name" value="ATP_synth_F1_a_nt-bd_dom"/>
</dbReference>
<dbReference type="InterPro" id="IPR005294">
    <property type="entry name" value="ATP_synth_F1_asu"/>
</dbReference>
<dbReference type="InterPro" id="IPR020003">
    <property type="entry name" value="ATPase_a/bsu_AS"/>
</dbReference>
<dbReference type="InterPro" id="IPR004100">
    <property type="entry name" value="ATPase_F1/V1/A1_a/bsu_N"/>
</dbReference>
<dbReference type="InterPro" id="IPR036121">
    <property type="entry name" value="ATPase_F1/V1/A1_a/bsu_N_sf"/>
</dbReference>
<dbReference type="InterPro" id="IPR000194">
    <property type="entry name" value="ATPase_F1/V1/A1_a/bsu_nucl-bd"/>
</dbReference>
<dbReference type="InterPro" id="IPR027417">
    <property type="entry name" value="P-loop_NTPase"/>
</dbReference>
<dbReference type="NCBIfam" id="TIGR00962">
    <property type="entry name" value="atpA"/>
    <property type="match status" value="1"/>
</dbReference>
<dbReference type="NCBIfam" id="NF009884">
    <property type="entry name" value="PRK13343.1"/>
    <property type="match status" value="1"/>
</dbReference>
<dbReference type="PANTHER" id="PTHR48082">
    <property type="entry name" value="ATP SYNTHASE SUBUNIT ALPHA, MITOCHONDRIAL"/>
    <property type="match status" value="1"/>
</dbReference>
<dbReference type="PANTHER" id="PTHR48082:SF2">
    <property type="entry name" value="ATP SYNTHASE SUBUNIT ALPHA, MITOCHONDRIAL"/>
    <property type="match status" value="1"/>
</dbReference>
<dbReference type="Pfam" id="PF00006">
    <property type="entry name" value="ATP-synt_ab"/>
    <property type="match status" value="1"/>
</dbReference>
<dbReference type="Pfam" id="PF00306">
    <property type="entry name" value="ATP-synt_ab_C"/>
    <property type="match status" value="1"/>
</dbReference>
<dbReference type="Pfam" id="PF02874">
    <property type="entry name" value="ATP-synt_ab_N"/>
    <property type="match status" value="1"/>
</dbReference>
<dbReference type="SUPFAM" id="SSF47917">
    <property type="entry name" value="C-terminal domain of alpha and beta subunits of F1 ATP synthase"/>
    <property type="match status" value="1"/>
</dbReference>
<dbReference type="SUPFAM" id="SSF50615">
    <property type="entry name" value="N-terminal domain of alpha and beta subunits of F1 ATP synthase"/>
    <property type="match status" value="1"/>
</dbReference>
<dbReference type="SUPFAM" id="SSF52540">
    <property type="entry name" value="P-loop containing nucleoside triphosphate hydrolases"/>
    <property type="match status" value="1"/>
</dbReference>
<dbReference type="PROSITE" id="PS00152">
    <property type="entry name" value="ATPASE_ALPHA_BETA"/>
    <property type="match status" value="1"/>
</dbReference>
<organism>
    <name type="scientific">Aeromonas salmonicida (strain A449)</name>
    <dbReference type="NCBI Taxonomy" id="382245"/>
    <lineage>
        <taxon>Bacteria</taxon>
        <taxon>Pseudomonadati</taxon>
        <taxon>Pseudomonadota</taxon>
        <taxon>Gammaproteobacteria</taxon>
        <taxon>Aeromonadales</taxon>
        <taxon>Aeromonadaceae</taxon>
        <taxon>Aeromonas</taxon>
    </lineage>
</organism>
<keyword id="KW-0066">ATP synthesis</keyword>
<keyword id="KW-0067">ATP-binding</keyword>
<keyword id="KW-0997">Cell inner membrane</keyword>
<keyword id="KW-1003">Cell membrane</keyword>
<keyword id="KW-0139">CF(1)</keyword>
<keyword id="KW-0375">Hydrogen ion transport</keyword>
<keyword id="KW-0406">Ion transport</keyword>
<keyword id="KW-0472">Membrane</keyword>
<keyword id="KW-0547">Nucleotide-binding</keyword>
<keyword id="KW-1278">Translocase</keyword>
<keyword id="KW-0813">Transport</keyword>
<gene>
    <name evidence="1" type="primary">atpA</name>
    <name type="ordered locus">ASA_4352</name>
</gene>
<name>ATPA_AERS4</name>
<sequence length="513" mass="55208">MQLNSTEIAELIKQRIAQFDVKSEARNEGTIVSVSDGIIRIHGLADAMQGEMIELPGNRFALALNLERDSVGAVIMGSYDGLSEGMKVKGTGRILEVPVGRGLLGRVLNTLGQPIDGKGPVENDGFSPIEVIAPGVIERKSVDQPVQTGLKAIDAMIPIGRGQRELIIGDRQVGKTAIAIDTIINQKDSGIKCVYVAIGQKASTIANVVRKLEEHGALANTIVVVASASEAAALQYLAPYAGCSMGEYFRDRGEDALIIYDDLSKQAVAYRQISLLLRRPPGREAYPGDVFYLHSRLLERAARVNAEYVEKFTNGAVKGQTGSLTALPIIETQAGDVSAFVPTNVISITDGQIFLTSQLFNSGIRPAVDPGISVSRVGGAAQTKIVKKLSGGIRTALAQYRELAAFAQFSSDLDEATRKQLDHGVKVTELMKQKQYSPMSVAQQSLVLFAAEKGYLSDVELNKIVDFEAALLSYANTQHAELMAEINAKADYNDAIVGKLTALLDDFKATQTW</sequence>
<reference key="1">
    <citation type="journal article" date="2008" name="BMC Genomics">
        <title>The genome of Aeromonas salmonicida subsp. salmonicida A449: insights into the evolution of a fish pathogen.</title>
        <authorList>
            <person name="Reith M.E."/>
            <person name="Singh R.K."/>
            <person name="Curtis B."/>
            <person name="Boyd J.M."/>
            <person name="Bouevitch A."/>
            <person name="Kimball J."/>
            <person name="Munholland J."/>
            <person name="Murphy C."/>
            <person name="Sarty D."/>
            <person name="Williams J."/>
            <person name="Nash J.H."/>
            <person name="Johnson S.C."/>
            <person name="Brown L.L."/>
        </authorList>
    </citation>
    <scope>NUCLEOTIDE SEQUENCE [LARGE SCALE GENOMIC DNA]</scope>
    <source>
        <strain>A449</strain>
    </source>
</reference>
<proteinExistence type="inferred from homology"/>
<feature type="chain" id="PRO_0000339015" description="ATP synthase subunit alpha">
    <location>
        <begin position="1"/>
        <end position="513"/>
    </location>
</feature>
<feature type="binding site" evidence="1">
    <location>
        <begin position="169"/>
        <end position="176"/>
    </location>
    <ligand>
        <name>ATP</name>
        <dbReference type="ChEBI" id="CHEBI:30616"/>
    </ligand>
</feature>
<feature type="site" description="Required for activity" evidence="1">
    <location>
        <position position="373"/>
    </location>
</feature>
<accession>A4STP5</accession>
<evidence type="ECO:0000255" key="1">
    <source>
        <dbReference type="HAMAP-Rule" id="MF_01346"/>
    </source>
</evidence>
<protein>
    <recommendedName>
        <fullName evidence="1">ATP synthase subunit alpha</fullName>
        <ecNumber evidence="1">7.1.2.2</ecNumber>
    </recommendedName>
    <alternativeName>
        <fullName evidence="1">ATP synthase F1 sector subunit alpha</fullName>
    </alternativeName>
    <alternativeName>
        <fullName evidence="1">F-ATPase subunit alpha</fullName>
    </alternativeName>
</protein>